<accession>Q9NPJ3</accession>
<accession>F5H2L4</accession>
<accession>O95549</accession>
<comment type="function">
    <text evidence="1 2 3">Catalyzes the hydrolysis of acyl-CoAs into free fatty acids and coenzyme A (CoASH), regulating their respective intracellular levels (PubMed:16934754, PubMed:19170545). Has acyl-CoA thioesterase activity towards medium (C12) and long-chain (C18) fatty acyl-CoA substrates (By similarity) (PubMed:16934754, PubMed:19170545). Can also hydrolyze 3-hydroxyphenylacetyl-CoA and 3,4-dihydroxyphenylacetyl-CoA (in vitro) (By similarity) (PubMed:16934754, PubMed:19170545). May play a role in controlling adaptive thermogenesis (By similarity).</text>
</comment>
<comment type="catalytic activity">
    <reaction evidence="3">
        <text>a fatty acyl-CoA + H2O = a fatty acid + CoA + H(+)</text>
        <dbReference type="Rhea" id="RHEA:16781"/>
        <dbReference type="ChEBI" id="CHEBI:15377"/>
        <dbReference type="ChEBI" id="CHEBI:15378"/>
        <dbReference type="ChEBI" id="CHEBI:28868"/>
        <dbReference type="ChEBI" id="CHEBI:57287"/>
        <dbReference type="ChEBI" id="CHEBI:77636"/>
    </reaction>
    <physiologicalReaction direction="left-to-right" evidence="6">
        <dbReference type="Rhea" id="RHEA:16782"/>
    </physiologicalReaction>
</comment>
<comment type="catalytic activity">
    <reaction evidence="3">
        <text>decanoyl-CoA + H2O = decanoate + CoA + H(+)</text>
        <dbReference type="Rhea" id="RHEA:40059"/>
        <dbReference type="ChEBI" id="CHEBI:15377"/>
        <dbReference type="ChEBI" id="CHEBI:15378"/>
        <dbReference type="ChEBI" id="CHEBI:27689"/>
        <dbReference type="ChEBI" id="CHEBI:57287"/>
        <dbReference type="ChEBI" id="CHEBI:61430"/>
    </reaction>
    <physiologicalReaction direction="left-to-right" evidence="6">
        <dbReference type="Rhea" id="RHEA:40060"/>
    </physiologicalReaction>
</comment>
<comment type="catalytic activity">
    <reaction evidence="3">
        <text>octanoyl-CoA + H2O = octanoate + CoA + H(+)</text>
        <dbReference type="Rhea" id="RHEA:30143"/>
        <dbReference type="ChEBI" id="CHEBI:15377"/>
        <dbReference type="ChEBI" id="CHEBI:15378"/>
        <dbReference type="ChEBI" id="CHEBI:25646"/>
        <dbReference type="ChEBI" id="CHEBI:57287"/>
        <dbReference type="ChEBI" id="CHEBI:57386"/>
    </reaction>
    <physiologicalReaction direction="left-to-right" evidence="6">
        <dbReference type="Rhea" id="RHEA:30144"/>
    </physiologicalReaction>
</comment>
<comment type="catalytic activity">
    <reaction evidence="3">
        <text>butanoyl-CoA + H2O = butanoate + CoA + H(+)</text>
        <dbReference type="Rhea" id="RHEA:40111"/>
        <dbReference type="ChEBI" id="CHEBI:15377"/>
        <dbReference type="ChEBI" id="CHEBI:15378"/>
        <dbReference type="ChEBI" id="CHEBI:17968"/>
        <dbReference type="ChEBI" id="CHEBI:57287"/>
        <dbReference type="ChEBI" id="CHEBI:57371"/>
    </reaction>
    <physiologicalReaction direction="left-to-right" evidence="6">
        <dbReference type="Rhea" id="RHEA:40112"/>
    </physiologicalReaction>
</comment>
<comment type="catalytic activity">
    <reaction evidence="3">
        <text>hexanoyl-CoA + H2O = hexanoate + CoA + H(+)</text>
        <dbReference type="Rhea" id="RHEA:40115"/>
        <dbReference type="ChEBI" id="CHEBI:15377"/>
        <dbReference type="ChEBI" id="CHEBI:15378"/>
        <dbReference type="ChEBI" id="CHEBI:17120"/>
        <dbReference type="ChEBI" id="CHEBI:57287"/>
        <dbReference type="ChEBI" id="CHEBI:62620"/>
    </reaction>
    <physiologicalReaction direction="left-to-right" evidence="6">
        <dbReference type="Rhea" id="RHEA:40116"/>
    </physiologicalReaction>
</comment>
<comment type="catalytic activity">
    <reaction evidence="3">
        <text>tetradecanoyl-CoA + H2O = tetradecanoate + CoA + H(+)</text>
        <dbReference type="Rhea" id="RHEA:40119"/>
        <dbReference type="ChEBI" id="CHEBI:15377"/>
        <dbReference type="ChEBI" id="CHEBI:15378"/>
        <dbReference type="ChEBI" id="CHEBI:30807"/>
        <dbReference type="ChEBI" id="CHEBI:57287"/>
        <dbReference type="ChEBI" id="CHEBI:57385"/>
    </reaction>
    <physiologicalReaction direction="left-to-right" evidence="6">
        <dbReference type="Rhea" id="RHEA:40120"/>
    </physiologicalReaction>
</comment>
<comment type="catalytic activity">
    <reaction evidence="3">
        <text>hexadecanoyl-CoA + H2O = hexadecanoate + CoA + H(+)</text>
        <dbReference type="Rhea" id="RHEA:16645"/>
        <dbReference type="ChEBI" id="CHEBI:7896"/>
        <dbReference type="ChEBI" id="CHEBI:15377"/>
        <dbReference type="ChEBI" id="CHEBI:15378"/>
        <dbReference type="ChEBI" id="CHEBI:57287"/>
        <dbReference type="ChEBI" id="CHEBI:57379"/>
        <dbReference type="EC" id="3.1.2.2"/>
    </reaction>
    <physiologicalReaction direction="left-to-right" evidence="6">
        <dbReference type="Rhea" id="RHEA:16646"/>
    </physiologicalReaction>
</comment>
<comment type="catalytic activity">
    <reaction evidence="3">
        <text>dodecanoyl-CoA + H2O = dodecanoate + CoA + H(+)</text>
        <dbReference type="Rhea" id="RHEA:30135"/>
        <dbReference type="ChEBI" id="CHEBI:15377"/>
        <dbReference type="ChEBI" id="CHEBI:15378"/>
        <dbReference type="ChEBI" id="CHEBI:18262"/>
        <dbReference type="ChEBI" id="CHEBI:57287"/>
        <dbReference type="ChEBI" id="CHEBI:57375"/>
    </reaction>
    <physiologicalReaction direction="left-to-right" evidence="6">
        <dbReference type="Rhea" id="RHEA:30136"/>
    </physiologicalReaction>
</comment>
<comment type="catalytic activity">
    <reaction evidence="3">
        <text>(9Z)-octadecenoyl-CoA + H2O = (9Z)-octadecenoate + CoA + H(+)</text>
        <dbReference type="Rhea" id="RHEA:40139"/>
        <dbReference type="ChEBI" id="CHEBI:15377"/>
        <dbReference type="ChEBI" id="CHEBI:15378"/>
        <dbReference type="ChEBI" id="CHEBI:30823"/>
        <dbReference type="ChEBI" id="CHEBI:57287"/>
        <dbReference type="ChEBI" id="CHEBI:57387"/>
    </reaction>
    <physiologicalReaction direction="left-to-right" evidence="6">
        <dbReference type="Rhea" id="RHEA:40140"/>
    </physiologicalReaction>
</comment>
<comment type="catalytic activity">
    <reaction evidence="3">
        <text>(5Z,8Z,11Z,14Z)-eicosatetraenoyl-CoA + H2O = (5Z,8Z,11Z,14Z)-eicosatetraenoate + CoA + H(+)</text>
        <dbReference type="Rhea" id="RHEA:40151"/>
        <dbReference type="ChEBI" id="CHEBI:15377"/>
        <dbReference type="ChEBI" id="CHEBI:15378"/>
        <dbReference type="ChEBI" id="CHEBI:32395"/>
        <dbReference type="ChEBI" id="CHEBI:57287"/>
        <dbReference type="ChEBI" id="CHEBI:57368"/>
    </reaction>
    <physiologicalReaction direction="left-to-right" evidence="6">
        <dbReference type="Rhea" id="RHEA:40152"/>
    </physiologicalReaction>
</comment>
<comment type="biophysicochemical properties">
    <kinetics>
        <KM evidence="3">4.9 uM for n-decanoyl-CoA</KM>
        <KM evidence="3">26 uM for n-octanoyl-CoA</KM>
        <KM evidence="3">70 uM for n-hexanoyl-CoA</KM>
        <KM evidence="3">600 uM for n-butyryl-CoA</KM>
        <KM evidence="3">220 uM for 2-butenoyl-CoA</KM>
        <KM evidence="3">120 uM for beta-methylcrotonyl-CoA</KM>
        <KM evidence="3">180 uM for crotonyl-CoA</KM>
        <KM evidence="3">250 uM for tiglyl-CoA</KM>
        <KM evidence="3">190 uM for n-propionyl-CoA</KM>
        <KM evidence="3">290 uM for acetyl-CoA</KM>
        <KM evidence="3">9.9 uM for lauroyl-CoA/dodecanoyl-CoA</KM>
        <KM evidence="3">5 uM for myristoyl-CoA/tetradecanoyl-CoA (at 25 degrees Celsius)</KM>
        <KM evidence="3">9 uM for myristoyl-CoA/tetradecanoyl-CoA (at 37 degrees Celsius)</KM>
        <KM evidence="3">16 uM for n-palmitoyl-CoA</KM>
        <KM evidence="3">9 uM for palmitoleoyl-CoA</KM>
        <KM evidence="3">20 uM for stearoyl-CoA</KM>
        <KM evidence="3">9 uM for oleoyl-CoA</KM>
        <KM evidence="3">310 uM for linoleoyl-CoA</KM>
        <KM evidence="3">20 uM for arachidonoyl-CoA/(5Z,8Z,11Z,14Z)-eicosatetraenoate</KM>
        <KM evidence="3">41 uM for 3-hydroxyphenylacetyl-CoA</KM>
        <KM evidence="3">10 uM for 3,4-dihydroxyphenylacetyl-CoA</KM>
        <KM evidence="3">25 uM for 3,5-dihydroxyphenylacetyl-CoA</KM>
        <KM evidence="3">49 uM for 4-hydroxyphenylacetyl-CoA</KM>
        <KM evidence="3">240 uM for phenylacetyl-CoA</KM>
        <KM evidence="3">32 uM for 3-hydroxybenzoyl-CoA</KM>
        <KM evidence="3">13 uM for 4-chlorobenzoyl-CoA</KM>
        <KM evidence="3">110 uM for beta-hydroxybutyryl-CoA</KM>
        <KM evidence="3">670 uM for glutaryl-CoA</KM>
        <KM evidence="3">2900 uM for 3-hydroxy-3-methylglutaryl-CoA</KM>
        <KM evidence="3">280 uM for malonyl-CoA</KM>
        <KM evidence="3">210 uM for methylmalonyl-CoA</KM>
        <text evidence="3">kcat is 0.016 sec(-1) for n-decanoyl-CoA hydrolase activity (PubMed:19170545). kcat is 0.0047 sec(-1) for n-octanoyl-CoA hydrolase activity (PubMed:19170545). kcat is 0.022 sec(-1) for n-hexanoyl-CoA hydrolase activity (PubMed:19170545). kcat is 0.047 sec(-1) for n-butyryl-CoA hydrolase activity (PubMed:19170545). kcat is 0.014 sec(-1) for 2-butenoyl-CoA hydrolase activity (PubMed:19170545). kcat is 0.023 sec(-1) for beta-methylcrotonyl-CoA hydrolase activity (PubMed:19170545). kcat is 0.0076 sec(-1) for crotonyl-CoA hydrolase activity (PubMed:19170545). kcat is 0.02 sec(-1) for tiglyl-CoA hydrolase activity (PubMed:19170545). kcat is 0.036 sec(-1) for n-propionyl-CoA hydrolase activity (PubMed:19170545). kcat is 0.054 sec(-1) for acetyl-CoA hydrolase activity (PubMed:19170545). kcat is 0.019 sec(-1) for lauroyl-CoA hydrolase activity (PubMed:19170545). kcat is 0.02 sec(-1) for myristoyl-CoA (at 25 degrees Celsius) hydrolase activity (PubMed:19170545). kcat is 0.07 sec(-1) for myristoyl-CoA (at 37 degrees Celsius) hydrolase activity (PubMed:19170545). kcat is 0.0044 sec(-1) for n-palmitoyl-CoA hydrolase activity (PubMed:19170545). kcat is 0.017 sec(-1) for palmitoleoyl-CoA hydrolase activity (PubMed:19170545). kcat is 0.011 sec(-1) for stearoyl-CoA hydrolase activity (PubMed:19170545). kcat is 0.011 sec(-1) for oleoyl-CoA hydrolase activity (PubMed:19170545). kcat is 0.017 sec(-1) for linoleoyl-CoA hydrolase activity (PubMed:19170545). kcat is 0.022 sec(-1) for arachidonoyl-CoA hydrolase activity (PubMed:19170545). kcat is 1.4 sec(-1) for 3-hydroxyphenylacetyl-CoA hydrolase activity (PubMed:19170545). kcat is 0.19 sec(-1) for 3,4-dihydroxyphenylacetyl-CoA hydrolase activity (PubMed:19170545). kcat is 0.19 sec(-1) for 3,5-dihydroxyphenylacetyl-CoA hydrolase activity (PubMed:19170545). kcat is 0.14 sec(-1) for 4-hydroxyphenylacetyl-CoA hydrolase activity (PubMed:19170545). kcat is 0.084 sec(-1) for phenylacetyl-CoA hydrolase activity (PubMed:19170545). kcat is 0.011 sec(-1) for 3-hydroxybenzoyl-CoA hydrolase activity (PubMed:19170545). kcat is 0.032 sec(-1) for 4-chlorobenzoyl-CoA hydrolase activity (PubMed:19170545). kcat is 0.18 sec(-1) for beta-hydroxybutyryl-CoA hydrolase activity (PubMed:19170545). kcat is 0.05 sec(-1) for glutaryl-CoA hydrolase activity (PubMed:19170545). kcat is 0.079 sec(-1) for 3-hydroxy-3-methylglutaryl-CoA hydrolase activity (PubMed:19170545). kcat is 0.066 sec(-1) for malonyl-CoA hydrolase activity (PubMed:19170545). kcat is 0.083 sec(-1) for methylmalonyl-CoA hydrolase activity (PubMed:19170545).</text>
    </kinetics>
</comment>
<comment type="subunit">
    <text evidence="1 2 3">Homotetramer (PubMed:16934754, PubMed:19170545). Interacts with PCTP (By similarity).</text>
</comment>
<comment type="interaction">
    <interactant intactId="EBI-1045357">
        <id>Q9NPJ3</id>
    </interactant>
    <interactant intactId="EBI-399080">
        <id>Q92993</id>
        <label>KAT5</label>
    </interactant>
    <organismsDiffer>false</organismsDiffer>
    <experiments>3</experiments>
</comment>
<comment type="interaction">
    <interactant intactId="EBI-1045357">
        <id>Q9NPJ3</id>
    </interactant>
    <interactant intactId="EBI-11742507">
        <id>Q8TAP4-4</id>
        <label>LMO3</label>
    </interactant>
    <organismsDiffer>false</organismsDiffer>
    <experiments>3</experiments>
</comment>
<comment type="interaction">
    <interactant intactId="EBI-1045357">
        <id>Q9NPJ3</id>
    </interactant>
    <interactant intactId="EBI-718622">
        <id>Q969H8</id>
        <label>MYDGF</label>
    </interactant>
    <organismsDiffer>false</organismsDiffer>
    <experiments>3</experiments>
</comment>
<comment type="interaction">
    <interactant intactId="EBI-1045357">
        <id>Q9NPJ3</id>
    </interactant>
    <interactant intactId="EBI-741158">
        <id>Q96HA8</id>
        <label>NTAQ1</label>
    </interactant>
    <organismsDiffer>false</organismsDiffer>
    <experiments>3</experiments>
</comment>
<comment type="interaction">
    <interactant intactId="EBI-1045357">
        <id>Q9NPJ3</id>
    </interactant>
    <interactant intactId="EBI-9090795">
        <id>Q15047-2</id>
        <label>SETDB1</label>
    </interactant>
    <organismsDiffer>false</organismsDiffer>
    <experiments>3</experiments>
</comment>
<comment type="interaction">
    <interactant intactId="EBI-1045357">
        <id>Q9NPJ3</id>
    </interactant>
    <interactant intactId="EBI-742688">
        <id>Q9NZD8</id>
        <label>SPG21</label>
    </interactant>
    <organismsDiffer>false</organismsDiffer>
    <experiments>3</experiments>
</comment>
<comment type="interaction">
    <interactant intactId="EBI-1045357">
        <id>Q9NPJ3</id>
    </interactant>
    <interactant intactId="EBI-359832">
        <id>P61981</id>
        <label>YWHAG</label>
    </interactant>
    <organismsDiffer>false</organismsDiffer>
    <experiments>3</experiments>
</comment>
<comment type="subcellular location">
    <subcellularLocation>
        <location evidence="1">Cytoplasm</location>
        <location evidence="1">Cytosol</location>
    </subcellularLocation>
    <subcellularLocation>
        <location evidence="1">Mitochondrion</location>
    </subcellularLocation>
    <subcellularLocation>
        <location evidence="1">Nucleus</location>
    </subcellularLocation>
    <subcellularLocation>
        <location evidence="1">Cytoplasm</location>
        <location evidence="1">Cytoskeleton</location>
        <location evidence="1">Spindle</location>
    </subcellularLocation>
    <text evidence="1">During interphase, found both in the nucleus and in the cytoplasm. At mitosis, localizes to the spindle. Colocalizes with tubulin.</text>
</comment>
<comment type="alternative products">
    <event type="alternative splicing"/>
    <isoform>
        <id>Q9NPJ3-1</id>
        <name>1</name>
        <sequence type="displayed"/>
    </isoform>
    <isoform>
        <id>Q9NPJ3-2</id>
        <name>2</name>
        <sequence type="described" ref="VSP_046101"/>
    </isoform>
</comment>
<comment type="similarity">
    <text evidence="7">Belongs to the thioesterase PaaI family.</text>
</comment>
<evidence type="ECO:0000250" key="1">
    <source>
        <dbReference type="UniProtKB" id="Q9CQR4"/>
    </source>
</evidence>
<evidence type="ECO:0000269" key="2">
    <source>
    </source>
</evidence>
<evidence type="ECO:0000269" key="3">
    <source>
    </source>
</evidence>
<evidence type="ECO:0000303" key="4">
    <source>
    </source>
</evidence>
<evidence type="ECO:0000303" key="5">
    <source>
    </source>
</evidence>
<evidence type="ECO:0000303" key="6">
    <source>
    </source>
</evidence>
<evidence type="ECO:0000305" key="7"/>
<evidence type="ECO:0000305" key="8">
    <source>
    </source>
</evidence>
<evidence type="ECO:0000312" key="9">
    <source>
        <dbReference type="HGNC" id="HGNC:20999"/>
    </source>
</evidence>
<evidence type="ECO:0007744" key="10">
    <source>
        <dbReference type="PDB" id="2F0X"/>
    </source>
</evidence>
<evidence type="ECO:0007744" key="11">
    <source>
        <dbReference type="PDB" id="3F5O"/>
    </source>
</evidence>
<evidence type="ECO:0007744" key="12">
    <source>
    </source>
</evidence>
<evidence type="ECO:0007744" key="13">
    <source>
    </source>
</evidence>
<evidence type="ECO:0007744" key="14">
    <source>
    </source>
</evidence>
<evidence type="ECO:0007744" key="15">
    <source>
    </source>
</evidence>
<evidence type="ECO:0007829" key="16">
    <source>
        <dbReference type="PDB" id="3F5O"/>
    </source>
</evidence>
<sequence>MTSMTQSLREVIKAMTKARNFERVLGKITLVSAAPGKVICEMKVEEEHTNAIGTLHGGLTATLVDNISTMALLCTERGAPGVSVDMNITYMSPAKLGEDIVITAHVLKQGKTLAFTSVDLTNKATGKLIAQGRHTKHLGN</sequence>
<feature type="chain" id="PRO_0000156697" description="Acyl-coenzyme A thioesterase 13">
    <location>
        <begin position="1"/>
        <end position="140"/>
    </location>
</feature>
<feature type="initiator methionine" description="Removed; alternate" evidence="12 13 14 15">
    <location>
        <position position="1"/>
    </location>
</feature>
<feature type="chain" id="PRO_0000424501" description="Acyl-coenzyme A thioesterase 13, N-terminally processed">
    <location>
        <begin position="2"/>
        <end position="140"/>
    </location>
</feature>
<feature type="binding site" evidence="3 11">
    <location>
        <position position="46"/>
    </location>
    <ligand>
        <name>CoA</name>
        <dbReference type="ChEBI" id="CHEBI:57287"/>
    </ligand>
</feature>
<feature type="binding site" evidence="8 11">
    <location>
        <position position="50"/>
    </location>
    <ligand>
        <name>substrate</name>
    </ligand>
</feature>
<feature type="binding site" evidence="8 11">
    <location>
        <position position="81"/>
    </location>
    <ligand>
        <name>substrate</name>
    </ligand>
</feature>
<feature type="binding site" evidence="3 11">
    <location>
        <position position="83"/>
    </location>
    <ligand>
        <name>CoA</name>
        <dbReference type="ChEBI" id="CHEBI:57287"/>
    </ligand>
</feature>
<feature type="binding site" evidence="3 11">
    <location>
        <begin position="90"/>
        <end position="95"/>
    </location>
    <ligand>
        <name>CoA</name>
        <dbReference type="ChEBI" id="CHEBI:57287"/>
    </ligand>
</feature>
<feature type="binding site" evidence="3 11">
    <location>
        <begin position="108"/>
        <end position="113"/>
    </location>
    <ligand>
        <name>CoA</name>
        <dbReference type="ChEBI" id="CHEBI:57287"/>
    </ligand>
</feature>
<feature type="binding site" evidence="3 11">
    <location>
        <position position="137"/>
    </location>
    <ligand>
        <name>CoA</name>
        <dbReference type="ChEBI" id="CHEBI:57287"/>
    </ligand>
</feature>
<feature type="modified residue" description="N-acetylmethionine" evidence="13 14 15">
    <location>
        <position position="1"/>
    </location>
</feature>
<feature type="modified residue" description="N-acetylthreonine; in Acyl-coenzyme A thioesterase 13, N-terminally processed" evidence="12 13 14 15">
    <location>
        <position position="2"/>
    </location>
</feature>
<feature type="modified residue" description="N6-acetyllysine" evidence="1">
    <location>
        <position position="27"/>
    </location>
</feature>
<feature type="modified residue" description="N6-acetyllysine" evidence="1">
    <location>
        <position position="37"/>
    </location>
</feature>
<feature type="modified residue" description="N6-acetyllysine" evidence="1">
    <location>
        <position position="43"/>
    </location>
</feature>
<feature type="modified residue" description="N6-acetyllysine" evidence="1">
    <location>
        <position position="108"/>
    </location>
</feature>
<feature type="modified residue" description="N6-acetyllysine" evidence="1">
    <location>
        <position position="127"/>
    </location>
</feature>
<feature type="splice variant" id="VSP_046101" description="In isoform 2." evidence="4">
    <original>MTSMTQSLREVIKAMTKARNFERVLG</original>
    <variation>MVR</variation>
    <location>
        <begin position="1"/>
        <end position="26"/>
    </location>
</feature>
<feature type="mutagenesis site" description="Reduced acyl-CoA hydrolase activity." evidence="3">
    <original>N</original>
    <variation>A</variation>
    <location>
        <position position="50"/>
    </location>
</feature>
<feature type="mutagenesis site" description="Decreases affinity for substrate." evidence="3">
    <original>H</original>
    <variation>A</variation>
    <location>
        <position position="56"/>
    </location>
</feature>
<feature type="mutagenesis site" description="Loss of acyl-CoA hydrolase activity." evidence="2 3">
    <original>D</original>
    <variation>A</variation>
    <location>
        <position position="65"/>
    </location>
</feature>
<feature type="mutagenesis site" description="Reduced acyl-CoA hydrolase activity." evidence="2 3">
    <original>D</original>
    <variation>E</variation>
    <variation>N</variation>
    <location>
        <position position="65"/>
    </location>
</feature>
<feature type="mutagenesis site" description="Reduced acyl-CoA hydrolase activity." evidence="3">
    <original>S</original>
    <variation>A</variation>
    <location>
        <position position="83"/>
    </location>
</feature>
<feature type="helix" evidence="16">
    <location>
        <begin position="3"/>
        <end position="15"/>
    </location>
</feature>
<feature type="strand" evidence="16">
    <location>
        <begin position="18"/>
        <end position="20"/>
    </location>
</feature>
<feature type="helix" evidence="16">
    <location>
        <begin position="21"/>
        <end position="25"/>
    </location>
</feature>
<feature type="strand" evidence="16">
    <location>
        <begin position="29"/>
        <end position="34"/>
    </location>
</feature>
<feature type="strand" evidence="16">
    <location>
        <begin position="37"/>
        <end position="43"/>
    </location>
</feature>
<feature type="helix" evidence="16">
    <location>
        <begin position="46"/>
        <end position="48"/>
    </location>
</feature>
<feature type="strand" evidence="16">
    <location>
        <begin position="53"/>
        <end position="55"/>
    </location>
</feature>
<feature type="helix" evidence="16">
    <location>
        <begin position="57"/>
        <end position="73"/>
    </location>
</feature>
<feature type="strand" evidence="16">
    <location>
        <begin position="75"/>
        <end position="77"/>
    </location>
</feature>
<feature type="strand" evidence="16">
    <location>
        <begin position="82"/>
        <end position="90"/>
    </location>
</feature>
<feature type="strand" evidence="16">
    <location>
        <begin position="99"/>
        <end position="109"/>
    </location>
</feature>
<feature type="strand" evidence="16">
    <location>
        <begin position="111"/>
        <end position="122"/>
    </location>
</feature>
<feature type="turn" evidence="16">
    <location>
        <begin position="123"/>
        <end position="125"/>
    </location>
</feature>
<feature type="strand" evidence="16">
    <location>
        <begin position="128"/>
        <end position="137"/>
    </location>
</feature>
<proteinExistence type="evidence at protein level"/>
<organism>
    <name type="scientific">Homo sapiens</name>
    <name type="common">Human</name>
    <dbReference type="NCBI Taxonomy" id="9606"/>
    <lineage>
        <taxon>Eukaryota</taxon>
        <taxon>Metazoa</taxon>
        <taxon>Chordata</taxon>
        <taxon>Craniata</taxon>
        <taxon>Vertebrata</taxon>
        <taxon>Euteleostomi</taxon>
        <taxon>Mammalia</taxon>
        <taxon>Eutheria</taxon>
        <taxon>Euarchontoglires</taxon>
        <taxon>Primates</taxon>
        <taxon>Haplorrhini</taxon>
        <taxon>Catarrhini</taxon>
        <taxon>Hominidae</taxon>
        <taxon>Homo</taxon>
    </lineage>
</organism>
<reference key="1">
    <citation type="journal article" date="2000" name="Proc. Natl. Acad. Sci. U.S.A.">
        <title>Gene expression profiling in the human hypothalamus-pituitary-adrenal axis and full-length cDNA cloning.</title>
        <authorList>
            <person name="Hu R.-M."/>
            <person name="Han Z.-G."/>
            <person name="Song H.-D."/>
            <person name="Peng Y.-D."/>
            <person name="Huang Q.-H."/>
            <person name="Ren S.-X."/>
            <person name="Gu Y.-J."/>
            <person name="Huang C.-H."/>
            <person name="Li Y.-B."/>
            <person name="Jiang C.-L."/>
            <person name="Fu G."/>
            <person name="Zhang Q.-H."/>
            <person name="Gu B.-W."/>
            <person name="Dai M."/>
            <person name="Mao Y.-F."/>
            <person name="Gao G.-F."/>
            <person name="Rong R."/>
            <person name="Ye M."/>
            <person name="Zhou J."/>
            <person name="Xu S.-H."/>
            <person name="Gu J."/>
            <person name="Shi J.-X."/>
            <person name="Jin W.-R."/>
            <person name="Zhang C.-K."/>
            <person name="Wu T.-M."/>
            <person name="Huang G.-Y."/>
            <person name="Chen Z."/>
            <person name="Chen M.-D."/>
            <person name="Chen J.-L."/>
        </authorList>
    </citation>
    <scope>NUCLEOTIDE SEQUENCE [LARGE SCALE MRNA] (ISOFORM 1)</scope>
    <source>
        <tissue>Adrenal gland</tissue>
        <tissue>Hypothalamus</tissue>
    </source>
</reference>
<reference key="2">
    <citation type="submission" date="2000-06" db="EMBL/GenBank/DDBJ databases">
        <title>Human acute promyelocytic leukemia cell line NB4's apoptosis related genes.</title>
        <authorList>
            <person name="Yu W.-Q."/>
            <person name="Sun B.-Z."/>
            <person name="Chai Y.-B."/>
            <person name="Zhu F."/>
            <person name="Liu X.-S."/>
            <person name="Li Z."/>
            <person name="Lu F."/>
            <person name="Yan W."/>
            <person name="Yang H."/>
            <person name="Zhao Z.-L."/>
        </authorList>
    </citation>
    <scope>NUCLEOTIDE SEQUENCE [LARGE SCALE MRNA] (ISOFORM 1)</scope>
    <source>
        <tissue>Promyelocytic leukemia</tissue>
    </source>
</reference>
<reference key="3">
    <citation type="journal article" date="2004" name="Nat. Genet.">
        <title>Complete sequencing and characterization of 21,243 full-length human cDNAs.</title>
        <authorList>
            <person name="Ota T."/>
            <person name="Suzuki Y."/>
            <person name="Nishikawa T."/>
            <person name="Otsuki T."/>
            <person name="Sugiyama T."/>
            <person name="Irie R."/>
            <person name="Wakamatsu A."/>
            <person name="Hayashi K."/>
            <person name="Sato H."/>
            <person name="Nagai K."/>
            <person name="Kimura K."/>
            <person name="Makita H."/>
            <person name="Sekine M."/>
            <person name="Obayashi M."/>
            <person name="Nishi T."/>
            <person name="Shibahara T."/>
            <person name="Tanaka T."/>
            <person name="Ishii S."/>
            <person name="Yamamoto J."/>
            <person name="Saito K."/>
            <person name="Kawai Y."/>
            <person name="Isono Y."/>
            <person name="Nakamura Y."/>
            <person name="Nagahari K."/>
            <person name="Murakami K."/>
            <person name="Yasuda T."/>
            <person name="Iwayanagi T."/>
            <person name="Wagatsuma M."/>
            <person name="Shiratori A."/>
            <person name="Sudo H."/>
            <person name="Hosoiri T."/>
            <person name="Kaku Y."/>
            <person name="Kodaira H."/>
            <person name="Kondo H."/>
            <person name="Sugawara M."/>
            <person name="Takahashi M."/>
            <person name="Kanda K."/>
            <person name="Yokoi T."/>
            <person name="Furuya T."/>
            <person name="Kikkawa E."/>
            <person name="Omura Y."/>
            <person name="Abe K."/>
            <person name="Kamihara K."/>
            <person name="Katsuta N."/>
            <person name="Sato K."/>
            <person name="Tanikawa M."/>
            <person name="Yamazaki M."/>
            <person name="Ninomiya K."/>
            <person name="Ishibashi T."/>
            <person name="Yamashita H."/>
            <person name="Murakawa K."/>
            <person name="Fujimori K."/>
            <person name="Tanai H."/>
            <person name="Kimata M."/>
            <person name="Watanabe M."/>
            <person name="Hiraoka S."/>
            <person name="Chiba Y."/>
            <person name="Ishida S."/>
            <person name="Ono Y."/>
            <person name="Takiguchi S."/>
            <person name="Watanabe S."/>
            <person name="Yosida M."/>
            <person name="Hotuta T."/>
            <person name="Kusano J."/>
            <person name="Kanehori K."/>
            <person name="Takahashi-Fujii A."/>
            <person name="Hara H."/>
            <person name="Tanase T.-O."/>
            <person name="Nomura Y."/>
            <person name="Togiya S."/>
            <person name="Komai F."/>
            <person name="Hara R."/>
            <person name="Takeuchi K."/>
            <person name="Arita M."/>
            <person name="Imose N."/>
            <person name="Musashino K."/>
            <person name="Yuuki H."/>
            <person name="Oshima A."/>
            <person name="Sasaki N."/>
            <person name="Aotsuka S."/>
            <person name="Yoshikawa Y."/>
            <person name="Matsunawa H."/>
            <person name="Ichihara T."/>
            <person name="Shiohata N."/>
            <person name="Sano S."/>
            <person name="Moriya S."/>
            <person name="Momiyama H."/>
            <person name="Satoh N."/>
            <person name="Takami S."/>
            <person name="Terashima Y."/>
            <person name="Suzuki O."/>
            <person name="Nakagawa S."/>
            <person name="Senoh A."/>
            <person name="Mizoguchi H."/>
            <person name="Goto Y."/>
            <person name="Shimizu F."/>
            <person name="Wakebe H."/>
            <person name="Hishigaki H."/>
            <person name="Watanabe T."/>
            <person name="Sugiyama A."/>
            <person name="Takemoto M."/>
            <person name="Kawakami B."/>
            <person name="Yamazaki M."/>
            <person name="Watanabe K."/>
            <person name="Kumagai A."/>
            <person name="Itakura S."/>
            <person name="Fukuzumi Y."/>
            <person name="Fujimori Y."/>
            <person name="Komiyama M."/>
            <person name="Tashiro H."/>
            <person name="Tanigami A."/>
            <person name="Fujiwara T."/>
            <person name="Ono T."/>
            <person name="Yamada K."/>
            <person name="Fujii Y."/>
            <person name="Ozaki K."/>
            <person name="Hirao M."/>
            <person name="Ohmori Y."/>
            <person name="Kawabata A."/>
            <person name="Hikiji T."/>
            <person name="Kobatake N."/>
            <person name="Inagaki H."/>
            <person name="Ikema Y."/>
            <person name="Okamoto S."/>
            <person name="Okitani R."/>
            <person name="Kawakami T."/>
            <person name="Noguchi S."/>
            <person name="Itoh T."/>
            <person name="Shigeta K."/>
            <person name="Senba T."/>
            <person name="Matsumura K."/>
            <person name="Nakajima Y."/>
            <person name="Mizuno T."/>
            <person name="Morinaga M."/>
            <person name="Sasaki M."/>
            <person name="Togashi T."/>
            <person name="Oyama M."/>
            <person name="Hata H."/>
            <person name="Watanabe M."/>
            <person name="Komatsu T."/>
            <person name="Mizushima-Sugano J."/>
            <person name="Satoh T."/>
            <person name="Shirai Y."/>
            <person name="Takahashi Y."/>
            <person name="Nakagawa K."/>
            <person name="Okumura K."/>
            <person name="Nagase T."/>
            <person name="Nomura N."/>
            <person name="Kikuchi H."/>
            <person name="Masuho Y."/>
            <person name="Yamashita R."/>
            <person name="Nakai K."/>
            <person name="Yada T."/>
            <person name="Nakamura Y."/>
            <person name="Ohara O."/>
            <person name="Isogai T."/>
            <person name="Sugano S."/>
        </authorList>
    </citation>
    <scope>NUCLEOTIDE SEQUENCE [LARGE SCALE MRNA] (ISOFORMS 1 AND 2)</scope>
    <source>
        <tissue>Teratocarcinoma</tissue>
    </source>
</reference>
<reference key="4">
    <citation type="journal article" date="2003" name="Nature">
        <title>The DNA sequence and analysis of human chromosome 6.</title>
        <authorList>
            <person name="Mungall A.J."/>
            <person name="Palmer S.A."/>
            <person name="Sims S.K."/>
            <person name="Edwards C.A."/>
            <person name="Ashurst J.L."/>
            <person name="Wilming L."/>
            <person name="Jones M.C."/>
            <person name="Horton R."/>
            <person name="Hunt S.E."/>
            <person name="Scott C.E."/>
            <person name="Gilbert J.G.R."/>
            <person name="Clamp M.E."/>
            <person name="Bethel G."/>
            <person name="Milne S."/>
            <person name="Ainscough R."/>
            <person name="Almeida J.P."/>
            <person name="Ambrose K.D."/>
            <person name="Andrews T.D."/>
            <person name="Ashwell R.I.S."/>
            <person name="Babbage A.K."/>
            <person name="Bagguley C.L."/>
            <person name="Bailey J."/>
            <person name="Banerjee R."/>
            <person name="Barker D.J."/>
            <person name="Barlow K.F."/>
            <person name="Bates K."/>
            <person name="Beare D.M."/>
            <person name="Beasley H."/>
            <person name="Beasley O."/>
            <person name="Bird C.P."/>
            <person name="Blakey S.E."/>
            <person name="Bray-Allen S."/>
            <person name="Brook J."/>
            <person name="Brown A.J."/>
            <person name="Brown J.Y."/>
            <person name="Burford D.C."/>
            <person name="Burrill W."/>
            <person name="Burton J."/>
            <person name="Carder C."/>
            <person name="Carter N.P."/>
            <person name="Chapman J.C."/>
            <person name="Clark S.Y."/>
            <person name="Clark G."/>
            <person name="Clee C.M."/>
            <person name="Clegg S."/>
            <person name="Cobley V."/>
            <person name="Collier R.E."/>
            <person name="Collins J.E."/>
            <person name="Colman L.K."/>
            <person name="Corby N.R."/>
            <person name="Coville G.J."/>
            <person name="Culley K.M."/>
            <person name="Dhami P."/>
            <person name="Davies J."/>
            <person name="Dunn M."/>
            <person name="Earthrowl M.E."/>
            <person name="Ellington A.E."/>
            <person name="Evans K.A."/>
            <person name="Faulkner L."/>
            <person name="Francis M.D."/>
            <person name="Frankish A."/>
            <person name="Frankland J."/>
            <person name="French L."/>
            <person name="Garner P."/>
            <person name="Garnett J."/>
            <person name="Ghori M.J."/>
            <person name="Gilby L.M."/>
            <person name="Gillson C.J."/>
            <person name="Glithero R.J."/>
            <person name="Grafham D.V."/>
            <person name="Grant M."/>
            <person name="Gribble S."/>
            <person name="Griffiths C."/>
            <person name="Griffiths M.N.D."/>
            <person name="Hall R."/>
            <person name="Halls K.S."/>
            <person name="Hammond S."/>
            <person name="Harley J.L."/>
            <person name="Hart E.A."/>
            <person name="Heath P.D."/>
            <person name="Heathcott R."/>
            <person name="Holmes S.J."/>
            <person name="Howden P.J."/>
            <person name="Howe K.L."/>
            <person name="Howell G.R."/>
            <person name="Huckle E."/>
            <person name="Humphray S.J."/>
            <person name="Humphries M.D."/>
            <person name="Hunt A.R."/>
            <person name="Johnson C.M."/>
            <person name="Joy A.A."/>
            <person name="Kay M."/>
            <person name="Keenan S.J."/>
            <person name="Kimberley A.M."/>
            <person name="King A."/>
            <person name="Laird G.K."/>
            <person name="Langford C."/>
            <person name="Lawlor S."/>
            <person name="Leongamornlert D.A."/>
            <person name="Leversha M."/>
            <person name="Lloyd C.R."/>
            <person name="Lloyd D.M."/>
            <person name="Loveland J.E."/>
            <person name="Lovell J."/>
            <person name="Martin S."/>
            <person name="Mashreghi-Mohammadi M."/>
            <person name="Maslen G.L."/>
            <person name="Matthews L."/>
            <person name="McCann O.T."/>
            <person name="McLaren S.J."/>
            <person name="McLay K."/>
            <person name="McMurray A."/>
            <person name="Moore M.J.F."/>
            <person name="Mullikin J.C."/>
            <person name="Niblett D."/>
            <person name="Nickerson T."/>
            <person name="Novik K.L."/>
            <person name="Oliver K."/>
            <person name="Overton-Larty E.K."/>
            <person name="Parker A."/>
            <person name="Patel R."/>
            <person name="Pearce A.V."/>
            <person name="Peck A.I."/>
            <person name="Phillimore B.J.C.T."/>
            <person name="Phillips S."/>
            <person name="Plumb R.W."/>
            <person name="Porter K.M."/>
            <person name="Ramsey Y."/>
            <person name="Ranby S.A."/>
            <person name="Rice C.M."/>
            <person name="Ross M.T."/>
            <person name="Searle S.M."/>
            <person name="Sehra H.K."/>
            <person name="Sheridan E."/>
            <person name="Skuce C.D."/>
            <person name="Smith S."/>
            <person name="Smith M."/>
            <person name="Spraggon L."/>
            <person name="Squares S.L."/>
            <person name="Steward C.A."/>
            <person name="Sycamore N."/>
            <person name="Tamlyn-Hall G."/>
            <person name="Tester J."/>
            <person name="Theaker A.J."/>
            <person name="Thomas D.W."/>
            <person name="Thorpe A."/>
            <person name="Tracey A."/>
            <person name="Tromans A."/>
            <person name="Tubby B."/>
            <person name="Wall M."/>
            <person name="Wallis J.M."/>
            <person name="West A.P."/>
            <person name="White S.S."/>
            <person name="Whitehead S.L."/>
            <person name="Whittaker H."/>
            <person name="Wild A."/>
            <person name="Willey D.J."/>
            <person name="Wilmer T.E."/>
            <person name="Wood J.M."/>
            <person name="Wray P.W."/>
            <person name="Wyatt J.C."/>
            <person name="Young L."/>
            <person name="Younger R.M."/>
            <person name="Bentley D.R."/>
            <person name="Coulson A."/>
            <person name="Durbin R.M."/>
            <person name="Hubbard T."/>
            <person name="Sulston J.E."/>
            <person name="Dunham I."/>
            <person name="Rogers J."/>
            <person name="Beck S."/>
        </authorList>
    </citation>
    <scope>NUCLEOTIDE SEQUENCE [LARGE SCALE GENOMIC DNA]</scope>
</reference>
<reference key="5">
    <citation type="journal article" date="2004" name="Genome Res.">
        <title>The status, quality, and expansion of the NIH full-length cDNA project: the Mammalian Gene Collection (MGC).</title>
        <authorList>
            <consortium name="The MGC Project Team"/>
        </authorList>
    </citation>
    <scope>NUCLEOTIDE SEQUENCE [LARGE SCALE MRNA] (ISOFORM 1)</scope>
    <source>
        <tissue>Cervix</tissue>
    </source>
</reference>
<reference key="6">
    <citation type="journal article" date="2009" name="Anal. Chem.">
        <title>Lys-N and trypsin cover complementary parts of the phosphoproteome in a refined SCX-based approach.</title>
        <authorList>
            <person name="Gauci S."/>
            <person name="Helbig A.O."/>
            <person name="Slijper M."/>
            <person name="Krijgsveld J."/>
            <person name="Heck A.J."/>
            <person name="Mohammed S."/>
        </authorList>
    </citation>
    <scope>ACETYLATION [LARGE SCALE ANALYSIS] AT THR-2</scope>
    <scope>CLEAVAGE OF INITIATOR METHIONINE [LARGE SCALE ANALYSIS]</scope>
    <scope>IDENTIFICATION BY MASS SPECTROMETRY [LARGE SCALE ANALYSIS]</scope>
</reference>
<reference key="7">
    <citation type="journal article" date="2011" name="BMC Syst. Biol.">
        <title>Initial characterization of the human central proteome.</title>
        <authorList>
            <person name="Burkard T.R."/>
            <person name="Planyavsky M."/>
            <person name="Kaupe I."/>
            <person name="Breitwieser F.P."/>
            <person name="Buerckstuemmer T."/>
            <person name="Bennett K.L."/>
            <person name="Superti-Furga G."/>
            <person name="Colinge J."/>
        </authorList>
    </citation>
    <scope>IDENTIFICATION BY MASS SPECTROMETRY [LARGE SCALE ANALYSIS]</scope>
</reference>
<reference key="8">
    <citation type="journal article" date="2012" name="Mol. Cell. Proteomics">
        <title>Comparative large-scale characterisation of plant vs. mammal proteins reveals similar and idiosyncratic N-alpha acetylation features.</title>
        <authorList>
            <person name="Bienvenut W.V."/>
            <person name="Sumpton D."/>
            <person name="Martinez A."/>
            <person name="Lilla S."/>
            <person name="Espagne C."/>
            <person name="Meinnel T."/>
            <person name="Giglione C."/>
        </authorList>
    </citation>
    <scope>ACETYLATION [LARGE SCALE ANALYSIS] AT MET-1 AND THR-2</scope>
    <scope>CLEAVAGE OF INITIATOR METHIONINE [LARGE SCALE ANALYSIS]</scope>
    <scope>IDENTIFICATION BY MASS SPECTROMETRY [LARGE SCALE ANALYSIS]</scope>
</reference>
<reference key="9">
    <citation type="journal article" date="2012" name="Proc. Natl. Acad. Sci. U.S.A.">
        <title>N-terminal acetylome analyses and functional insights of the N-terminal acetyltransferase NatB.</title>
        <authorList>
            <person name="Van Damme P."/>
            <person name="Lasa M."/>
            <person name="Polevoda B."/>
            <person name="Gazquez C."/>
            <person name="Elosegui-Artola A."/>
            <person name="Kim D.S."/>
            <person name="De Juan-Pardo E."/>
            <person name="Demeyer K."/>
            <person name="Hole K."/>
            <person name="Larrea E."/>
            <person name="Timmerman E."/>
            <person name="Prieto J."/>
            <person name="Arnesen T."/>
            <person name="Sherman F."/>
            <person name="Gevaert K."/>
            <person name="Aldabe R."/>
        </authorList>
    </citation>
    <scope>ACETYLATION [LARGE SCALE ANALYSIS] AT MET-1 AND THR-2</scope>
    <scope>CLEAVAGE OF INITIATOR METHIONINE [LARGE SCALE ANALYSIS]</scope>
    <scope>IDENTIFICATION BY MASS SPECTROMETRY [LARGE SCALE ANALYSIS]</scope>
</reference>
<reference key="10">
    <citation type="journal article" date="2014" name="J. Proteomics">
        <title>An enzyme assisted RP-RPLC approach for in-depth analysis of human liver phosphoproteome.</title>
        <authorList>
            <person name="Bian Y."/>
            <person name="Song C."/>
            <person name="Cheng K."/>
            <person name="Dong M."/>
            <person name="Wang F."/>
            <person name="Huang J."/>
            <person name="Sun D."/>
            <person name="Wang L."/>
            <person name="Ye M."/>
            <person name="Zou H."/>
        </authorList>
    </citation>
    <scope>IDENTIFICATION BY MASS SPECTROMETRY [LARGE SCALE ANALYSIS]</scope>
    <source>
        <tissue>Liver</tissue>
    </source>
</reference>
<reference key="11">
    <citation type="journal article" date="2015" name="Proteomics">
        <title>N-terminome analysis of the human mitochondrial proteome.</title>
        <authorList>
            <person name="Vaca Jacome A.S."/>
            <person name="Rabilloud T."/>
            <person name="Schaeffer-Reiss C."/>
            <person name="Rompais M."/>
            <person name="Ayoub D."/>
            <person name="Lane L."/>
            <person name="Bairoch A."/>
            <person name="Van Dorsselaer A."/>
            <person name="Carapito C."/>
        </authorList>
    </citation>
    <scope>ACETYLATION [LARGE SCALE ANALYSIS] AT MET-1 AND THR-2</scope>
    <scope>CLEAVAGE OF INITIATOR METHIONINE [LARGE SCALE ANALYSIS]</scope>
    <scope>IDENTIFICATION BY MASS SPECTROMETRY [LARGE SCALE ANALYSIS]</scope>
</reference>
<reference evidence="10" key="12">
    <citation type="journal article" date="2006" name="Biochem. Biophys. Res. Commun.">
        <title>Crystal structure of human thioesterase superfamily member 2.</title>
        <authorList>
            <person name="Cheng Z."/>
            <person name="Song F."/>
            <person name="Shan X."/>
            <person name="Wei Z."/>
            <person name="Wang Y."/>
            <person name="Dunaway-Mariano D."/>
            <person name="Gong W."/>
        </authorList>
    </citation>
    <scope>X-RAY CRYSTALLOGRAPHY (2.3 ANGSTROMS)</scope>
    <scope>FUNCTION</scope>
    <scope>IDENTIFICATION BY MASS SPECTROMETRY</scope>
    <scope>MUTAGENESIS OF ASP-65</scope>
    <scope>SUBUNIT</scope>
</reference>
<reference evidence="11" key="13">
    <citation type="journal article" date="2009" name="Biochemistry">
        <title>The mechanisms of human hotdog-fold thioesterase 2 (hTHEM2) substrate recognition and catalysis illuminated by a structure and function based analysis.</title>
        <authorList>
            <person name="Cao J."/>
            <person name="Xu H."/>
            <person name="Zhao H."/>
            <person name="Gong W."/>
            <person name="Dunaway-Mariano D."/>
        </authorList>
    </citation>
    <scope>X-RAY CRYSTALLOGRAPHY (1.7 ANGSTROMS) IN COMPLEX WITH SUBSTRATE ANALOG</scope>
    <scope>FUNCTION</scope>
    <scope>BIOPHYSICOCHEMICAL PROPERTIES</scope>
    <scope>MUTAGENESIS OF ASN-50; HIS-56; ASP-65 AND SER-83</scope>
    <scope>SUBUNIT</scope>
    <scope>CATALYTIC ACTIVITY</scope>
</reference>
<reference key="14">
    <citation type="submission" date="2009-02" db="PDB data bank">
        <title>The crystal structure of human thioesterase superfamily member 2.</title>
        <authorList>
            <consortium name="Structural genomics consortium (SGC)"/>
        </authorList>
    </citation>
    <scope>X-RAY CRYSTALLOGRAPHY (2.2 ANGSTROMS)</scope>
</reference>
<dbReference type="EC" id="3.1.2.-" evidence="3"/>
<dbReference type="EC" id="3.1.2.2" evidence="3"/>
<dbReference type="EMBL" id="AF155649">
    <property type="protein sequence ID" value="AAF67006.1"/>
    <property type="molecule type" value="mRNA"/>
</dbReference>
<dbReference type="EMBL" id="AF220186">
    <property type="protein sequence ID" value="AAF67651.1"/>
    <property type="molecule type" value="mRNA"/>
</dbReference>
<dbReference type="EMBL" id="AF274952">
    <property type="protein sequence ID" value="AAK07529.1"/>
    <property type="molecule type" value="mRNA"/>
</dbReference>
<dbReference type="EMBL" id="AK000508">
    <property type="protein sequence ID" value="BAA91215.1"/>
    <property type="molecule type" value="mRNA"/>
</dbReference>
<dbReference type="EMBL" id="AK309738">
    <property type="status" value="NOT_ANNOTATED_CDS"/>
    <property type="molecule type" value="mRNA"/>
</dbReference>
<dbReference type="EMBL" id="AL031775">
    <property type="status" value="NOT_ANNOTATED_CDS"/>
    <property type="molecule type" value="Genomic_DNA"/>
</dbReference>
<dbReference type="EMBL" id="BC000894">
    <property type="protein sequence ID" value="AAH00894.1"/>
    <property type="molecule type" value="mRNA"/>
</dbReference>
<dbReference type="CCDS" id="CCDS4558.1">
    <molecule id="Q9NPJ3-1"/>
</dbReference>
<dbReference type="CCDS" id="CCDS54972.1">
    <molecule id="Q9NPJ3-2"/>
</dbReference>
<dbReference type="RefSeq" id="NP_001153566.1">
    <molecule id="Q9NPJ3-2"/>
    <property type="nucleotide sequence ID" value="NM_001160094.2"/>
</dbReference>
<dbReference type="RefSeq" id="NP_060943.1">
    <molecule id="Q9NPJ3-1"/>
    <property type="nucleotide sequence ID" value="NM_018473.4"/>
</dbReference>
<dbReference type="PDB" id="2F0X">
    <property type="method" value="X-ray"/>
    <property type="resolution" value="2.30 A"/>
    <property type="chains" value="A/B/C/D/E/F/G/H=1-140"/>
</dbReference>
<dbReference type="PDB" id="2H4U">
    <property type="method" value="X-ray"/>
    <property type="resolution" value="2.20 A"/>
    <property type="chains" value="A/B/C/D=19-140"/>
</dbReference>
<dbReference type="PDB" id="3F5O">
    <property type="method" value="X-ray"/>
    <property type="resolution" value="1.70 A"/>
    <property type="chains" value="A/B/C/D/E/F/G/H=1-140"/>
</dbReference>
<dbReference type="PDBsum" id="2F0X"/>
<dbReference type="PDBsum" id="2H4U"/>
<dbReference type="PDBsum" id="3F5O"/>
<dbReference type="SMR" id="Q9NPJ3"/>
<dbReference type="BioGRID" id="120958">
    <property type="interactions" value="49"/>
</dbReference>
<dbReference type="FunCoup" id="Q9NPJ3">
    <property type="interactions" value="1730"/>
</dbReference>
<dbReference type="IntAct" id="Q9NPJ3">
    <property type="interactions" value="14"/>
</dbReference>
<dbReference type="STRING" id="9606.ENSP00000230048"/>
<dbReference type="ChEMBL" id="CHEMBL4295957"/>
<dbReference type="DrugBank" id="DB08688">
    <property type="generic name" value="2-Undecanone"/>
</dbReference>
<dbReference type="iPTMnet" id="Q9NPJ3"/>
<dbReference type="PhosphoSitePlus" id="Q9NPJ3"/>
<dbReference type="SwissPalm" id="Q9NPJ3"/>
<dbReference type="BioMuta" id="ACOT13"/>
<dbReference type="jPOST" id="Q9NPJ3"/>
<dbReference type="MassIVE" id="Q9NPJ3"/>
<dbReference type="PaxDb" id="9606-ENSP00000230048"/>
<dbReference type="PeptideAtlas" id="Q9NPJ3"/>
<dbReference type="ProteomicsDB" id="26006"/>
<dbReference type="ProteomicsDB" id="82025">
    <molecule id="Q9NPJ3-1"/>
</dbReference>
<dbReference type="Pumba" id="Q9NPJ3"/>
<dbReference type="TopDownProteomics" id="Q9NPJ3-1">
    <molecule id="Q9NPJ3-1"/>
</dbReference>
<dbReference type="Antibodypedia" id="10661">
    <property type="antibodies" value="211 antibodies from 32 providers"/>
</dbReference>
<dbReference type="DNASU" id="55856"/>
<dbReference type="Ensembl" id="ENST00000230048.5">
    <molecule id="Q9NPJ3-1"/>
    <property type="protein sequence ID" value="ENSP00000230048.3"/>
    <property type="gene ID" value="ENSG00000112304.11"/>
</dbReference>
<dbReference type="Ensembl" id="ENST00000537591.5">
    <molecule id="Q9NPJ3-2"/>
    <property type="protein sequence ID" value="ENSP00000445552.1"/>
    <property type="gene ID" value="ENSG00000112304.11"/>
</dbReference>
<dbReference type="GeneID" id="55856"/>
<dbReference type="KEGG" id="hsa:55856"/>
<dbReference type="MANE-Select" id="ENST00000230048.5">
    <property type="protein sequence ID" value="ENSP00000230048.3"/>
    <property type="RefSeq nucleotide sequence ID" value="NM_018473.4"/>
    <property type="RefSeq protein sequence ID" value="NP_060943.1"/>
</dbReference>
<dbReference type="UCSC" id="uc003nek.4">
    <molecule id="Q9NPJ3-1"/>
    <property type="organism name" value="human"/>
</dbReference>
<dbReference type="AGR" id="HGNC:20999"/>
<dbReference type="CTD" id="55856"/>
<dbReference type="DisGeNET" id="55856"/>
<dbReference type="GeneCards" id="ACOT13"/>
<dbReference type="HGNC" id="HGNC:20999">
    <property type="gene designation" value="ACOT13"/>
</dbReference>
<dbReference type="HPA" id="ENSG00000112304">
    <property type="expression patterns" value="Tissue enhanced (liver)"/>
</dbReference>
<dbReference type="MIM" id="615652">
    <property type="type" value="gene"/>
</dbReference>
<dbReference type="neXtProt" id="NX_Q9NPJ3"/>
<dbReference type="OpenTargets" id="ENSG00000112304"/>
<dbReference type="PharmGKB" id="PA165617655"/>
<dbReference type="VEuPathDB" id="HostDB:ENSG00000112304"/>
<dbReference type="eggNOG" id="KOG3328">
    <property type="taxonomic scope" value="Eukaryota"/>
</dbReference>
<dbReference type="GeneTree" id="ENSGT00390000013934"/>
<dbReference type="HOGENOM" id="CLU_089876_12_2_1"/>
<dbReference type="InParanoid" id="Q9NPJ3"/>
<dbReference type="OMA" id="RDKVMVS"/>
<dbReference type="OrthoDB" id="46529at2759"/>
<dbReference type="PAN-GO" id="Q9NPJ3">
    <property type="GO annotations" value="1 GO annotation based on evolutionary models"/>
</dbReference>
<dbReference type="PhylomeDB" id="Q9NPJ3"/>
<dbReference type="TreeFam" id="TF315062"/>
<dbReference type="BRENDA" id="3.1.2.20">
    <property type="organism ID" value="2681"/>
</dbReference>
<dbReference type="PathwayCommons" id="Q9NPJ3"/>
<dbReference type="Reactome" id="R-HSA-77289">
    <property type="pathway name" value="Mitochondrial Fatty Acid Beta-Oxidation"/>
</dbReference>
<dbReference type="SABIO-RK" id="Q9NPJ3"/>
<dbReference type="SignaLink" id="Q9NPJ3"/>
<dbReference type="BioGRID-ORCS" id="55856">
    <property type="hits" value="15 hits in 1151 CRISPR screens"/>
</dbReference>
<dbReference type="CD-CODE" id="FB4E32DD">
    <property type="entry name" value="Presynaptic clusters and postsynaptic densities"/>
</dbReference>
<dbReference type="ChiTaRS" id="ACOT13">
    <property type="organism name" value="human"/>
</dbReference>
<dbReference type="EvolutionaryTrace" id="Q9NPJ3"/>
<dbReference type="GenomeRNAi" id="55856"/>
<dbReference type="Pharos" id="Q9NPJ3">
    <property type="development level" value="Tbio"/>
</dbReference>
<dbReference type="PRO" id="PR:Q9NPJ3"/>
<dbReference type="Proteomes" id="UP000005640">
    <property type="component" value="Chromosome 6"/>
</dbReference>
<dbReference type="RNAct" id="Q9NPJ3">
    <property type="molecule type" value="protein"/>
</dbReference>
<dbReference type="Bgee" id="ENSG00000112304">
    <property type="expression patterns" value="Expressed in right lobe of liver and 201 other cell types or tissues"/>
</dbReference>
<dbReference type="GO" id="GO:0005829">
    <property type="term" value="C:cytosol"/>
    <property type="evidence" value="ECO:0000304"/>
    <property type="project" value="Reactome"/>
</dbReference>
<dbReference type="GO" id="GO:0005759">
    <property type="term" value="C:mitochondrial matrix"/>
    <property type="evidence" value="ECO:0007669"/>
    <property type="project" value="Ensembl"/>
</dbReference>
<dbReference type="GO" id="GO:0005739">
    <property type="term" value="C:mitochondrion"/>
    <property type="evidence" value="ECO:0006056"/>
    <property type="project" value="FlyBase"/>
</dbReference>
<dbReference type="GO" id="GO:0005634">
    <property type="term" value="C:nucleus"/>
    <property type="evidence" value="ECO:0007005"/>
    <property type="project" value="UniProtKB"/>
</dbReference>
<dbReference type="GO" id="GO:0005819">
    <property type="term" value="C:spindle"/>
    <property type="evidence" value="ECO:0007669"/>
    <property type="project" value="UniProtKB-SubCell"/>
</dbReference>
<dbReference type="GO" id="GO:0047617">
    <property type="term" value="F:fatty acyl-CoA hydrolase activity"/>
    <property type="evidence" value="ECO:0000314"/>
    <property type="project" value="UniProtKB"/>
</dbReference>
<dbReference type="GO" id="GO:0046872">
    <property type="term" value="F:metal ion binding"/>
    <property type="evidence" value="ECO:0007669"/>
    <property type="project" value="UniProtKB-KW"/>
</dbReference>
<dbReference type="GO" id="GO:0006629">
    <property type="term" value="P:lipid metabolic process"/>
    <property type="evidence" value="ECO:0007669"/>
    <property type="project" value="UniProtKB-KW"/>
</dbReference>
<dbReference type="GO" id="GO:0120163">
    <property type="term" value="P:negative regulation of cold-induced thermogenesis"/>
    <property type="evidence" value="ECO:0000250"/>
    <property type="project" value="YuBioLab"/>
</dbReference>
<dbReference type="GO" id="GO:0051289">
    <property type="term" value="P:protein homotetramerization"/>
    <property type="evidence" value="ECO:0000353"/>
    <property type="project" value="UniProtKB"/>
</dbReference>
<dbReference type="CDD" id="cd03443">
    <property type="entry name" value="PaaI_thioesterase"/>
    <property type="match status" value="1"/>
</dbReference>
<dbReference type="FunFam" id="3.10.129.10:FF:000021">
    <property type="entry name" value="Acyl-coenzyme A thioesterase 13"/>
    <property type="match status" value="1"/>
</dbReference>
<dbReference type="Gene3D" id="3.10.129.10">
    <property type="entry name" value="Hotdog Thioesterase"/>
    <property type="match status" value="1"/>
</dbReference>
<dbReference type="InterPro" id="IPR039298">
    <property type="entry name" value="ACOT13"/>
</dbReference>
<dbReference type="InterPro" id="IPR029069">
    <property type="entry name" value="HotDog_dom_sf"/>
</dbReference>
<dbReference type="InterPro" id="IPR003736">
    <property type="entry name" value="PAAI_dom"/>
</dbReference>
<dbReference type="InterPro" id="IPR006683">
    <property type="entry name" value="Thioestr_dom"/>
</dbReference>
<dbReference type="NCBIfam" id="TIGR00369">
    <property type="entry name" value="unchar_dom_1"/>
    <property type="match status" value="1"/>
</dbReference>
<dbReference type="PANTHER" id="PTHR21660:SF1">
    <property type="entry name" value="ACYL-COENZYME A THIOESTERASE 13"/>
    <property type="match status" value="1"/>
</dbReference>
<dbReference type="PANTHER" id="PTHR21660">
    <property type="entry name" value="THIOESTERASE SUPERFAMILY MEMBER-RELATED"/>
    <property type="match status" value="1"/>
</dbReference>
<dbReference type="Pfam" id="PF03061">
    <property type="entry name" value="4HBT"/>
    <property type="match status" value="1"/>
</dbReference>
<dbReference type="SUPFAM" id="SSF54637">
    <property type="entry name" value="Thioesterase/thiol ester dehydrase-isomerase"/>
    <property type="match status" value="1"/>
</dbReference>
<keyword id="KW-0002">3D-structure</keyword>
<keyword id="KW-0007">Acetylation</keyword>
<keyword id="KW-0025">Alternative splicing</keyword>
<keyword id="KW-0963">Cytoplasm</keyword>
<keyword id="KW-0206">Cytoskeleton</keyword>
<keyword id="KW-0378">Hydrolase</keyword>
<keyword id="KW-0443">Lipid metabolism</keyword>
<keyword id="KW-0479">Metal-binding</keyword>
<keyword id="KW-0496">Mitochondrion</keyword>
<keyword id="KW-0539">Nucleus</keyword>
<keyword id="KW-1267">Proteomics identification</keyword>
<keyword id="KW-1185">Reference proteome</keyword>
<name>ACO13_HUMAN</name>
<gene>
    <name evidence="9" type="primary">ACOT13</name>
    <name type="synonym">THEM2</name>
    <name type="ORF">HT012</name>
    <name type="ORF">PNAS-27</name>
</gene>
<protein>
    <recommendedName>
        <fullName evidence="6">Acyl-coenzyme A thioesterase 13</fullName>
        <shortName evidence="6">Acyl-CoA thioesterase 13</shortName>
        <ecNumber evidence="3">3.1.2.-</ecNumber>
    </recommendedName>
    <alternativeName>
        <fullName evidence="6">Hotdog-fold thioesterase superfamily member 2</fullName>
    </alternativeName>
    <alternativeName>
        <fullName evidence="6">Palmitoyl-CoA hydrolase</fullName>
        <ecNumber evidence="3">3.1.2.2</ecNumber>
    </alternativeName>
    <alternativeName>
        <fullName evidence="5">Thioesterase superfamily member 2</fullName>
        <shortName evidence="5">THEM2</shortName>
    </alternativeName>
    <component>
        <recommendedName>
            <fullName>Acyl-coenzyme A thioesterase 13, N-terminally processed</fullName>
        </recommendedName>
    </component>
</protein>